<protein>
    <recommendedName>
        <fullName evidence="5">Auxin-responsive protein IAA32</fullName>
    </recommendedName>
    <alternativeName>
        <fullName evidence="5">Indoleacetic acid-induced protein 32</fullName>
    </alternativeName>
</protein>
<reference key="1">
    <citation type="journal article" date="2005" name="Plant Cell">
        <title>Functional genomic analysis of the AUXIN/INDOLE-3-ACETIC ACID gene family members in Arabidopsis thaliana.</title>
        <authorList>
            <person name="Overvoorde P.J."/>
            <person name="Okushima Y."/>
            <person name="Alonso J.M."/>
            <person name="Chan A."/>
            <person name="Chang C."/>
            <person name="Ecker J.R."/>
            <person name="Hughes B."/>
            <person name="Liu A."/>
            <person name="Onodera C."/>
            <person name="Quach H."/>
            <person name="Smith A."/>
            <person name="Yu G."/>
            <person name="Theologis A."/>
        </authorList>
    </citation>
    <scope>NUCLEOTIDE SEQUENCE [MRNA]</scope>
    <scope>GENE FAMILY</scope>
    <source>
        <strain>cv. Columbia</strain>
    </source>
</reference>
<reference key="2">
    <citation type="journal article" date="2010" name="Plant Cell">
        <title>Natural variation of transcriptional auxin response networks in Arabidopsis thaliana.</title>
        <authorList>
            <person name="Delker C."/>
            <person name="Poschl Y."/>
            <person name="Raschke A."/>
            <person name="Ullrich K."/>
            <person name="Ettingshausen S."/>
            <person name="Hauptmann V."/>
            <person name="Grosse I."/>
            <person name="Quint M."/>
        </authorList>
    </citation>
    <scope>NUCLEOTIDE SEQUENCE [GENOMIC DNA]</scope>
    <source>
        <strain>cv. Bor-4</strain>
    </source>
</reference>
<reference key="3">
    <citation type="journal article" date="1999" name="Nature">
        <title>Sequence and analysis of chromosome 2 of the plant Arabidopsis thaliana.</title>
        <authorList>
            <person name="Lin X."/>
            <person name="Kaul S."/>
            <person name="Rounsley S.D."/>
            <person name="Shea T.P."/>
            <person name="Benito M.-I."/>
            <person name="Town C.D."/>
            <person name="Fujii C.Y."/>
            <person name="Mason T.M."/>
            <person name="Bowman C.L."/>
            <person name="Barnstead M.E."/>
            <person name="Feldblyum T.V."/>
            <person name="Buell C.R."/>
            <person name="Ketchum K.A."/>
            <person name="Lee J.J."/>
            <person name="Ronning C.M."/>
            <person name="Koo H.L."/>
            <person name="Moffat K.S."/>
            <person name="Cronin L.A."/>
            <person name="Shen M."/>
            <person name="Pai G."/>
            <person name="Van Aken S."/>
            <person name="Umayam L."/>
            <person name="Tallon L.J."/>
            <person name="Gill J.E."/>
            <person name="Adams M.D."/>
            <person name="Carrera A.J."/>
            <person name="Creasy T.H."/>
            <person name="Goodman H.M."/>
            <person name="Somerville C.R."/>
            <person name="Copenhaver G.P."/>
            <person name="Preuss D."/>
            <person name="Nierman W.C."/>
            <person name="White O."/>
            <person name="Eisen J.A."/>
            <person name="Salzberg S.L."/>
            <person name="Fraser C.M."/>
            <person name="Venter J.C."/>
        </authorList>
    </citation>
    <scope>NUCLEOTIDE SEQUENCE [LARGE SCALE GENOMIC DNA]</scope>
    <source>
        <strain>cv. Columbia</strain>
    </source>
</reference>
<reference key="4">
    <citation type="journal article" date="2017" name="Plant J.">
        <title>Araport11: a complete reannotation of the Arabidopsis thaliana reference genome.</title>
        <authorList>
            <person name="Cheng C.Y."/>
            <person name="Krishnakumar V."/>
            <person name="Chan A.P."/>
            <person name="Thibaud-Nissen F."/>
            <person name="Schobel S."/>
            <person name="Town C.D."/>
        </authorList>
    </citation>
    <scope>GENOME REANNOTATION</scope>
    <source>
        <strain>cv. Columbia</strain>
    </source>
</reference>
<reference key="5">
    <citation type="journal article" date="2006" name="Plant Biotechnol. J.">
        <title>Simultaneous high-throughput recombinational cloning of open reading frames in closed and open configurations.</title>
        <authorList>
            <person name="Underwood B.A."/>
            <person name="Vanderhaeghen R."/>
            <person name="Whitford R."/>
            <person name="Town C.D."/>
            <person name="Hilson P."/>
        </authorList>
    </citation>
    <scope>NUCLEOTIDE SEQUENCE [LARGE SCALE MRNA]</scope>
    <source>
        <strain>cv. Columbia</strain>
    </source>
</reference>
<reference key="6">
    <citation type="submission" date="2002-04" db="EMBL/GenBank/DDBJ databases">
        <title>Nucleotide sequence of the Arabidopsis IAA31.</title>
        <authorList>
            <person name="Sessa G."/>
            <person name="Carabelli M."/>
            <person name="Ciarbelli A.R."/>
            <person name="Ruzza V."/>
            <person name="Steindler C."/>
            <person name="Ruberti I."/>
        </authorList>
    </citation>
    <scope>NUCLEOTIDE SEQUENCE [MRNA] OF 50-170</scope>
    <source>
        <strain>cv. Columbia</strain>
    </source>
</reference>
<reference key="7">
    <citation type="journal article" date="2002" name="Plant Mol. Biol.">
        <title>Genetics of Aux/IAA and ARF action in plant growth and development.</title>
        <authorList>
            <person name="Liscum E."/>
            <person name="Reed J.W."/>
        </authorList>
    </citation>
    <scope>GENE FAMILY</scope>
    <scope>NOMENCLATURE</scope>
    <scope>FUNCTION</scope>
</reference>
<reference key="8">
    <citation type="journal article" date="2004" name="Plant Cell">
        <title>Aux/IAA proteins contain a potent transcriptional repression domain.</title>
        <authorList>
            <person name="Tiwari S.B."/>
            <person name="Hagen G."/>
            <person name="Guilfoyle T.J."/>
        </authorList>
    </citation>
    <scope>TRANSCRIPTIONAL REPRESSION DOMAIN</scope>
</reference>
<evidence type="ECO:0000250" key="1"/>
<evidence type="ECO:0000250" key="2">
    <source>
        <dbReference type="UniProtKB" id="P49677"/>
    </source>
</evidence>
<evidence type="ECO:0000255" key="3">
    <source>
        <dbReference type="PROSITE-ProRule" id="PRU01081"/>
    </source>
</evidence>
<evidence type="ECO:0000269" key="4">
    <source>
    </source>
</evidence>
<evidence type="ECO:0000303" key="5">
    <source>
    </source>
</evidence>
<evidence type="ECO:0000305" key="6"/>
<evidence type="ECO:0000312" key="7">
    <source>
        <dbReference type="Araport" id="AT2G01200"/>
    </source>
</evidence>
<evidence type="ECO:0000312" key="8">
    <source>
        <dbReference type="EMBL" id="AAD14520.1"/>
    </source>
</evidence>
<organism>
    <name type="scientific">Arabidopsis thaliana</name>
    <name type="common">Mouse-ear cress</name>
    <dbReference type="NCBI Taxonomy" id="3702"/>
    <lineage>
        <taxon>Eukaryota</taxon>
        <taxon>Viridiplantae</taxon>
        <taxon>Streptophyta</taxon>
        <taxon>Embryophyta</taxon>
        <taxon>Tracheophyta</taxon>
        <taxon>Spermatophyta</taxon>
        <taxon>Magnoliopsida</taxon>
        <taxon>eudicotyledons</taxon>
        <taxon>Gunneridae</taxon>
        <taxon>Pentapetalae</taxon>
        <taxon>rosids</taxon>
        <taxon>malvids</taxon>
        <taxon>Brassicales</taxon>
        <taxon>Brassicaceae</taxon>
        <taxon>Camelineae</taxon>
        <taxon>Arabidopsis</taxon>
    </lineage>
</organism>
<accession>Q8RYC6</accession>
<accession>F4IM94</accession>
<accession>Q2VW97</accession>
<accession>Q9ZU47</accession>
<sequence length="191" mass="21662">MDPNTPADFFKGSSKFHTYYSQTKKGGGVIDLGLSLRTIQHETYLPPARMIGLDGYGELIDWSQPSYNSITQLKSEDTGHQRLAQGYYNNEGESRGKYAYVKVNLDGLVVGRKVCLVDQGAYATLALQLNDMFGMQTVSGLRLFQTESEFSLVYRDREGIWRNVGDVPWKEFVESVDRMRIARRNDALLPF</sequence>
<proteinExistence type="evidence at protein level"/>
<name>IAA32_ARATH</name>
<comment type="function">
    <text evidence="4">Aux/IAA proteins are short-lived transcriptional factors that function as repressors of early auxin response genes at low auxin concentrations. Repression is thought to result from the interaction with auxin response factors (ARFs), proteins that bind to the auxin-responsive promoter element (AuxRE). Formation of heterodimers with ARF proteins may alter their ability to modulate early auxin response genes expression.</text>
</comment>
<comment type="subunit">
    <text evidence="2">Homodimers and heterodimers.</text>
</comment>
<comment type="interaction">
    <interactant intactId="EBI-3946448">
        <id>Q8RYC6</id>
    </interactant>
    <interactant intactId="EBI-529887">
        <id>Q8RYC8</id>
        <label>ARF19</label>
    </interactant>
    <organismsDiffer>false</organismsDiffer>
    <experiments>4</experiments>
</comment>
<comment type="interaction">
    <interactant intactId="EBI-3946448">
        <id>Q8RYC6</id>
    </interactant>
    <interactant intactId="EBI-1799262">
        <id>Q94JM3</id>
        <label>ARF2</label>
    </interactant>
    <organismsDiffer>false</organismsDiffer>
    <experiments>6</experiments>
</comment>
<comment type="interaction">
    <interactant intactId="EBI-3946448">
        <id>Q8RYC6</id>
    </interactant>
    <interactant intactId="EBI-630505">
        <id>P49677</id>
        <label>IAA1</label>
    </interactant>
    <organismsDiffer>false</organismsDiffer>
    <experiments>3</experiments>
</comment>
<comment type="interaction">
    <interactant intactId="EBI-3946448">
        <id>Q8RYC6</id>
    </interactant>
    <interactant intactId="EBI-3946434">
        <id>Q38828</id>
        <label>IAA10</label>
    </interactant>
    <organismsDiffer>false</organismsDiffer>
    <experiments>5</experiments>
</comment>
<comment type="interaction">
    <interactant intactId="EBI-3946448">
        <id>Q8RYC6</id>
    </interactant>
    <interactant intactId="EBI-1554143">
        <id>Q38831</id>
        <label>IAA13</label>
    </interactant>
    <organismsDiffer>false</organismsDiffer>
    <experiments>5</experiments>
</comment>
<comment type="interaction">
    <interactant intactId="EBI-3946448">
        <id>Q8RYC6</id>
    </interactant>
    <interactant intactId="EBI-25524519">
        <id>A0A2H1ZEF6</id>
        <label>IAA15</label>
    </interactant>
    <organismsDiffer>false</organismsDiffer>
    <experiments>5</experiments>
</comment>
<comment type="interaction">
    <interactant intactId="EBI-3946448">
        <id>Q8RYC6</id>
    </interactant>
    <interactant intactId="EBI-632243">
        <id>P93830</id>
        <label>IAA17</label>
    </interactant>
    <organismsDiffer>false</organismsDiffer>
    <experiments>7</experiments>
</comment>
<comment type="interaction">
    <interactant intactId="EBI-3946448">
        <id>Q8RYC6</id>
    </interactant>
    <interactant intactId="EBI-632257">
        <id>O24409</id>
        <label>IAA19</label>
    </interactant>
    <organismsDiffer>false</organismsDiffer>
    <experiments>3</experiments>
</comment>
<comment type="interaction">
    <interactant intactId="EBI-3946448">
        <id>Q8RYC6</id>
    </interactant>
    <interactant intactId="EBI-632343">
        <id>P49678</id>
        <label>IAA2</label>
    </interactant>
    <organismsDiffer>false</organismsDiffer>
    <experiments>3</experiments>
</comment>
<comment type="interaction">
    <interactant intactId="EBI-3946448">
        <id>Q8RYC6</id>
    </interactant>
    <interactant intactId="EBI-632272">
        <id>O24410</id>
        <label>IAA20</label>
    </interactant>
    <organismsDiffer>false</organismsDiffer>
    <experiments>4</experiments>
</comment>
<comment type="interaction">
    <interactant intactId="EBI-3946448">
        <id>Q8RYC6</id>
    </interactant>
    <interactant intactId="EBI-3947418">
        <id>Q8LAL2</id>
        <label>IAA26</label>
    </interactant>
    <organismsDiffer>false</organismsDiffer>
    <experiments>5</experiments>
</comment>
<comment type="interaction">
    <interactant intactId="EBI-3946448">
        <id>Q8RYC6</id>
    </interactant>
    <interactant intactId="EBI-3946677">
        <id>Q9ZSY8</id>
        <label>IAA27</label>
    </interactant>
    <organismsDiffer>false</organismsDiffer>
    <experiments>3</experiments>
</comment>
<comment type="interaction">
    <interactant intactId="EBI-3946448">
        <id>Q8RYC6</id>
    </interactant>
    <interactant intactId="EBI-3133404">
        <id>Q9XFM0</id>
        <label>IAA28</label>
    </interactant>
    <organismsDiffer>false</organismsDiffer>
    <experiments>5</experiments>
</comment>
<comment type="interaction">
    <interactant intactId="EBI-3946448">
        <id>Q8RYC6</id>
    </interactant>
    <interactant intactId="EBI-307174">
        <id>Q38822</id>
        <label>IAA3</label>
    </interactant>
    <organismsDiffer>false</organismsDiffer>
    <experiments>5</experiments>
</comment>
<comment type="interaction">
    <interactant intactId="EBI-3946448">
        <id>Q8RYC6</id>
    </interactant>
    <interactant intactId="EBI-3946408">
        <id>Q8H174</id>
        <label>IAA31</label>
    </interactant>
    <organismsDiffer>false</organismsDiffer>
    <experiments>3</experiments>
</comment>
<comment type="interaction">
    <interactant intactId="EBI-3946448">
        <id>Q8RYC6</id>
    </interactant>
    <interactant intactId="EBI-3946739">
        <id>Q9FKM7</id>
        <label>IAA33</label>
    </interactant>
    <organismsDiffer>false</organismsDiffer>
    <experiments>3</experiments>
</comment>
<comment type="interaction">
    <interactant intactId="EBI-3946448">
        <id>Q8RYC6</id>
    </interactant>
    <interactant intactId="EBI-632187">
        <id>P33077</id>
        <label>IAA4</label>
    </interactant>
    <organismsDiffer>false</organismsDiffer>
    <experiments>5</experiments>
</comment>
<comment type="interaction">
    <interactant intactId="EBI-3946448">
        <id>Q8RYC6</id>
    </interactant>
    <interactant intactId="EBI-1554124">
        <id>Q38824</id>
        <label>IAA6</label>
    </interactant>
    <organismsDiffer>false</organismsDiffer>
    <experiments>3</experiments>
</comment>
<comment type="interaction">
    <interactant intactId="EBI-3946448">
        <id>Q8RYC6</id>
    </interactant>
    <interactant intactId="EBI-4426144">
        <id>Q9C9L2</id>
        <label>TCP15</label>
    </interactant>
    <organismsDiffer>false</organismsDiffer>
    <experiments>3</experiments>
</comment>
<comment type="interaction">
    <interactant intactId="EBI-3946448">
        <id>Q8RYC6</id>
    </interactant>
    <interactant intactId="EBI-25522447">
        <id>Q9MAH8</id>
        <label>TCP3</label>
    </interactant>
    <organismsDiffer>false</organismsDiffer>
    <experiments>3</experiments>
</comment>
<comment type="subcellular location">
    <subcellularLocation>
        <location evidence="1">Nucleus</location>
    </subcellularLocation>
</comment>
<comment type="alternative products">
    <event type="alternative splicing"/>
    <isoform>
        <id>Q8RYC6-1</id>
        <name>1</name>
        <sequence type="displayed"/>
    </isoform>
    <text>A number of isoforms are produced. According to EST sequences.</text>
</comment>
<comment type="induction">
    <text evidence="2">By auxin.</text>
</comment>
<comment type="domain">
    <text>The N-terminal half of the protein contains two conserved domains I and II. Domain I includes a slightly degenerated ERF-associated amphiphilic repression (EAR) motif which seems to be involved in the activity of transcriptional repression. Domain II is required for the correct degradation of the protein through the SCF-mediated ubiquitin-proteasome pathway. Interactions between Aux/IAA proteins and auxin response factors (ARFs) occur through their C-terminal dimerization domains III and IV.</text>
</comment>
<comment type="similarity">
    <text evidence="6">Belongs to the Aux/IAA family.</text>
</comment>
<comment type="caution">
    <text evidence="6">Was originally (Ref.6) erroneously named IAA31.</text>
</comment>
<comment type="sequence caution" evidence="6">
    <conflict type="erroneous gene model prediction">
        <sequence resource="EMBL-CDS" id="AAD14520"/>
    </conflict>
</comment>
<feature type="chain" id="PRO_0000112858" description="Auxin-responsive protein IAA32">
    <location>
        <begin position="1"/>
        <end position="191"/>
    </location>
</feature>
<feature type="domain" description="PB1" evidence="3">
    <location>
        <begin position="98"/>
        <end position="184"/>
    </location>
</feature>
<feature type="short sequence motif" description="EAR-like (transcriptional repression)">
    <location>
        <begin position="32"/>
        <end position="36"/>
    </location>
</feature>
<dbReference type="EMBL" id="AY669803">
    <property type="protein sequence ID" value="AAT67087.1"/>
    <property type="molecule type" value="mRNA"/>
</dbReference>
<dbReference type="EMBL" id="HM487929">
    <property type="protein sequence ID" value="ADL70814.1"/>
    <property type="molecule type" value="Genomic_DNA"/>
</dbReference>
<dbReference type="EMBL" id="AC006200">
    <property type="protein sequence ID" value="AAD14520.1"/>
    <property type="status" value="ALT_SEQ"/>
    <property type="molecule type" value="Genomic_DNA"/>
</dbReference>
<dbReference type="EMBL" id="CP002685">
    <property type="protein sequence ID" value="AEC05414.2"/>
    <property type="molecule type" value="Genomic_DNA"/>
</dbReference>
<dbReference type="EMBL" id="CP002685">
    <property type="protein sequence ID" value="AEC05415.1"/>
    <property type="molecule type" value="Genomic_DNA"/>
</dbReference>
<dbReference type="EMBL" id="DQ446449">
    <property type="protein sequence ID" value="ABE65790.1"/>
    <property type="molecule type" value="mRNA"/>
</dbReference>
<dbReference type="EMBL" id="AJ458329">
    <property type="protein sequence ID" value="CAD30211.1"/>
    <property type="molecule type" value="mRNA"/>
</dbReference>
<dbReference type="PIR" id="G84421">
    <property type="entry name" value="G84421"/>
</dbReference>
<dbReference type="RefSeq" id="NP_001318172.1">
    <molecule id="Q8RYC6-1"/>
    <property type="nucleotide sequence ID" value="NM_001335044.1"/>
</dbReference>
<dbReference type="RefSeq" id="NP_973390.1">
    <molecule id="Q8RYC6-1"/>
    <property type="nucleotide sequence ID" value="NM_201661.2"/>
</dbReference>
<dbReference type="SMR" id="Q8RYC6"/>
<dbReference type="BioGRID" id="52">
    <property type="interactions" value="43"/>
</dbReference>
<dbReference type="FunCoup" id="Q8RYC6">
    <property type="interactions" value="301"/>
</dbReference>
<dbReference type="IntAct" id="Q8RYC6">
    <property type="interactions" value="41"/>
</dbReference>
<dbReference type="STRING" id="3702.Q8RYC6"/>
<dbReference type="PaxDb" id="3702-AT2G01200.2"/>
<dbReference type="EnsemblPlants" id="AT2G01200.1">
    <molecule id="Q8RYC6-1"/>
    <property type="protein sequence ID" value="AT2G01200.1"/>
    <property type="gene ID" value="AT2G01200"/>
</dbReference>
<dbReference type="EnsemblPlants" id="AT2G01200.2">
    <molecule id="Q8RYC6-1"/>
    <property type="protein sequence ID" value="AT2G01200.2"/>
    <property type="gene ID" value="AT2G01200"/>
</dbReference>
<dbReference type="GeneID" id="814648"/>
<dbReference type="Gramene" id="AT2G01200.1">
    <molecule id="Q8RYC6-1"/>
    <property type="protein sequence ID" value="AT2G01200.1"/>
    <property type="gene ID" value="AT2G01200"/>
</dbReference>
<dbReference type="Gramene" id="AT2G01200.2">
    <molecule id="Q8RYC6-1"/>
    <property type="protein sequence ID" value="AT2G01200.2"/>
    <property type="gene ID" value="AT2G01200"/>
</dbReference>
<dbReference type="KEGG" id="ath:AT2G01200"/>
<dbReference type="Araport" id="AT2G01200"/>
<dbReference type="TAIR" id="AT2G01200">
    <property type="gene designation" value="IAA32"/>
</dbReference>
<dbReference type="eggNOG" id="ENOG502RZE6">
    <property type="taxonomic scope" value="Eukaryota"/>
</dbReference>
<dbReference type="HOGENOM" id="CLU_117411_0_0_1"/>
<dbReference type="InParanoid" id="Q8RYC6"/>
<dbReference type="OMA" id="HTYYSQT"/>
<dbReference type="PhylomeDB" id="Q8RYC6"/>
<dbReference type="PRO" id="PR:Q8RYC6"/>
<dbReference type="Proteomes" id="UP000006548">
    <property type="component" value="Chromosome 2"/>
</dbReference>
<dbReference type="ExpressionAtlas" id="Q8RYC6">
    <property type="expression patterns" value="baseline and differential"/>
</dbReference>
<dbReference type="GO" id="GO:0005634">
    <property type="term" value="C:nucleus"/>
    <property type="evidence" value="ECO:0007669"/>
    <property type="project" value="UniProtKB-SubCell"/>
</dbReference>
<dbReference type="GO" id="GO:0003700">
    <property type="term" value="F:DNA-binding transcription factor activity"/>
    <property type="evidence" value="ECO:0000250"/>
    <property type="project" value="TAIR"/>
</dbReference>
<dbReference type="GO" id="GO:0009734">
    <property type="term" value="P:auxin-activated signaling pathway"/>
    <property type="evidence" value="ECO:0007669"/>
    <property type="project" value="UniProtKB-KW"/>
</dbReference>
<dbReference type="GO" id="GO:0009793">
    <property type="term" value="P:embryo development ending in seed dormancy"/>
    <property type="evidence" value="ECO:0000315"/>
    <property type="project" value="TAIR"/>
</dbReference>
<dbReference type="GO" id="GO:0009555">
    <property type="term" value="P:pollen development"/>
    <property type="evidence" value="ECO:0000315"/>
    <property type="project" value="TAIR"/>
</dbReference>
<dbReference type="GO" id="GO:0009733">
    <property type="term" value="P:response to auxin"/>
    <property type="evidence" value="ECO:0000304"/>
    <property type="project" value="TAIR"/>
</dbReference>
<dbReference type="Gene3D" id="3.10.20.90">
    <property type="entry name" value="Phosphatidylinositol 3-kinase Catalytic Subunit, Chain A, domain 1"/>
    <property type="match status" value="1"/>
</dbReference>
<dbReference type="InterPro" id="IPR033389">
    <property type="entry name" value="AUX/IAA_dom"/>
</dbReference>
<dbReference type="InterPro" id="IPR003311">
    <property type="entry name" value="AUX_IAA"/>
</dbReference>
<dbReference type="InterPro" id="IPR053793">
    <property type="entry name" value="PB1-like"/>
</dbReference>
<dbReference type="PANTHER" id="PTHR31734">
    <property type="entry name" value="AUXIN-RESPONSIVE PROTEIN IAA17"/>
    <property type="match status" value="1"/>
</dbReference>
<dbReference type="PANTHER" id="PTHR31734:SF114">
    <property type="entry name" value="AUXIN-RESPONSIVE PROTEIN IAA32"/>
    <property type="match status" value="1"/>
</dbReference>
<dbReference type="Pfam" id="PF02309">
    <property type="entry name" value="AUX_IAA"/>
    <property type="match status" value="1"/>
</dbReference>
<dbReference type="SUPFAM" id="SSF54277">
    <property type="entry name" value="CAD &amp; PB1 domains"/>
    <property type="match status" value="1"/>
</dbReference>
<dbReference type="PROSITE" id="PS51745">
    <property type="entry name" value="PB1"/>
    <property type="match status" value="1"/>
</dbReference>
<gene>
    <name evidence="5" type="primary">IAA32</name>
    <name evidence="7" type="ordered locus">At2g01200</name>
    <name evidence="8" type="ORF">F10A8.8</name>
</gene>
<keyword id="KW-0025">Alternative splicing</keyword>
<keyword id="KW-0927">Auxin signaling pathway</keyword>
<keyword id="KW-0539">Nucleus</keyword>
<keyword id="KW-1185">Reference proteome</keyword>
<keyword id="KW-0678">Repressor</keyword>
<keyword id="KW-0804">Transcription</keyword>
<keyword id="KW-0805">Transcription regulation</keyword>